<organism>
    <name type="scientific">Pisum sativum</name>
    <name type="common">Garden pea</name>
    <name type="synonym">Lathyrus oleraceus</name>
    <dbReference type="NCBI Taxonomy" id="3888"/>
    <lineage>
        <taxon>Eukaryota</taxon>
        <taxon>Viridiplantae</taxon>
        <taxon>Streptophyta</taxon>
        <taxon>Embryophyta</taxon>
        <taxon>Tracheophyta</taxon>
        <taxon>Spermatophyta</taxon>
        <taxon>Magnoliopsida</taxon>
        <taxon>eudicotyledons</taxon>
        <taxon>Gunneridae</taxon>
        <taxon>Pentapetalae</taxon>
        <taxon>rosids</taxon>
        <taxon>fabids</taxon>
        <taxon>Fabales</taxon>
        <taxon>Fabaceae</taxon>
        <taxon>Papilionoideae</taxon>
        <taxon>50 kb inversion clade</taxon>
        <taxon>NPAAA clade</taxon>
        <taxon>Hologalegina</taxon>
        <taxon>IRL clade</taxon>
        <taxon>Fabeae</taxon>
        <taxon>Pisum</taxon>
    </lineage>
</organism>
<dbReference type="EMBL" id="X14021">
    <property type="protein sequence ID" value="CAA32186.1"/>
    <property type="molecule type" value="mRNA"/>
</dbReference>
<dbReference type="PIR" id="S04686">
    <property type="entry name" value="R5PM18"/>
</dbReference>
<dbReference type="SMR" id="P11891"/>
<dbReference type="OrthoDB" id="782293at2759"/>
<dbReference type="GO" id="GO:0009535">
    <property type="term" value="C:chloroplast thylakoid membrane"/>
    <property type="evidence" value="ECO:0007669"/>
    <property type="project" value="TreeGrafter"/>
</dbReference>
<dbReference type="GO" id="GO:1990904">
    <property type="term" value="C:ribonucleoprotein complex"/>
    <property type="evidence" value="ECO:0007669"/>
    <property type="project" value="UniProtKB-KW"/>
</dbReference>
<dbReference type="GO" id="GO:0005840">
    <property type="term" value="C:ribosome"/>
    <property type="evidence" value="ECO:0007669"/>
    <property type="project" value="UniProtKB-KW"/>
</dbReference>
<dbReference type="GO" id="GO:0032544">
    <property type="term" value="P:plastid translation"/>
    <property type="evidence" value="ECO:0007669"/>
    <property type="project" value="TreeGrafter"/>
</dbReference>
<dbReference type="CDD" id="cd23709">
    <property type="entry name" value="Psrp5_CTD"/>
    <property type="match status" value="1"/>
</dbReference>
<dbReference type="InterPro" id="IPR040307">
    <property type="entry name" value="Ribosomal_cL37"/>
</dbReference>
<dbReference type="PANTHER" id="PTHR34678">
    <property type="entry name" value="50S RIBOSOMAL PROTEIN 5, CHLOROPLASTIC"/>
    <property type="match status" value="1"/>
</dbReference>
<dbReference type="PANTHER" id="PTHR34678:SF1">
    <property type="entry name" value="LARGE RIBOSOMAL SUBUNIT PROTEIN CL37"/>
    <property type="match status" value="1"/>
</dbReference>
<gene>
    <name type="primary">PSRP5</name>
    <name type="synonym">RPL18</name>
</gene>
<evidence type="ECO:0000250" key="1"/>
<evidence type="ECO:0000256" key="2">
    <source>
        <dbReference type="SAM" id="MobiDB-lite"/>
    </source>
</evidence>
<evidence type="ECO:0000305" key="3"/>
<protein>
    <recommendedName>
        <fullName evidence="3">Large ribosomal subunit protein cL37</fullName>
    </recommendedName>
    <alternativeName>
        <fullName>50S ribosomal protein 5, chloroplastic</fullName>
    </alternativeName>
    <alternativeName>
        <fullName>50S ribosomal protein L18</fullName>
    </alternativeName>
    <alternativeName>
        <fullName>CL18</fullName>
    </alternativeName>
    <alternativeName>
        <fullName>Plastid-specific 50S ribosomal protein 5</fullName>
        <shortName>PSRP-5</shortName>
    </alternativeName>
</protein>
<keyword id="KW-0150">Chloroplast</keyword>
<keyword id="KW-0934">Plastid</keyword>
<keyword id="KW-0687">Ribonucleoprotein</keyword>
<keyword id="KW-0689">Ribosomal protein</keyword>
<keyword id="KW-0809">Transit peptide</keyword>
<comment type="subunit">
    <text>Part of the 50S ribosomal subunit.</text>
</comment>
<comment type="subcellular location">
    <subcellularLocation>
        <location>Plastid</location>
        <location>Chloroplast</location>
    </subcellularLocation>
</comment>
<comment type="similarity">
    <text evidence="3">Belongs to the chloroplast-specific ribosomal protein cL37 family.</text>
</comment>
<name>PSRP5_PEA</name>
<proteinExistence type="evidence at transcript level"/>
<reference key="1">
    <citation type="journal article" date="1988" name="Curr. Genet.">
        <title>Nucleotide sequences of cDNAs encoding four complete nuclear-encoded plastid ribosomal proteins.</title>
        <authorList>
            <person name="Gantt J.S."/>
        </authorList>
    </citation>
    <scope>NUCLEOTIDE SEQUENCE [MRNA]</scope>
    <source>
        <strain>cv. Little Marvel</strain>
        <tissue>Seedling</tissue>
    </source>
</reference>
<feature type="transit peptide" description="Chloroplast" evidence="1">
    <location>
        <begin position="1"/>
        <end position="63"/>
    </location>
</feature>
<feature type="chain" id="PRO_0000030554" description="Large ribosomal subunit protein cL37">
    <location>
        <begin position="64"/>
        <end position="145"/>
    </location>
</feature>
<feature type="region of interest" description="Disordered" evidence="2">
    <location>
        <begin position="125"/>
        <end position="145"/>
    </location>
</feature>
<sequence>MALLCFNSFTTTPVTSSSSLFPHPTANPISRVRIGLPTNCLKGFRILTPIVQKPRKNSIFIASAAAGADSNVADGVEESESKKESDVVSVDKLPLESKLKEREERMLKMKLAKKIRLKRKRLVQKRRLRKKGNWPPSKMKKLEGV</sequence>
<accession>P11891</accession>